<dbReference type="EC" id="4.2.1.20" evidence="1"/>
<dbReference type="EMBL" id="CP000768">
    <property type="protein sequence ID" value="ABS43308.1"/>
    <property type="molecule type" value="Genomic_DNA"/>
</dbReference>
<dbReference type="SMR" id="A7H522"/>
<dbReference type="KEGG" id="cjd:JJD26997_1610"/>
<dbReference type="HOGENOM" id="CLU_016734_0_0_7"/>
<dbReference type="UniPathway" id="UPA00035">
    <property type="reaction ID" value="UER00044"/>
</dbReference>
<dbReference type="Proteomes" id="UP000002302">
    <property type="component" value="Chromosome"/>
</dbReference>
<dbReference type="GO" id="GO:0005829">
    <property type="term" value="C:cytosol"/>
    <property type="evidence" value="ECO:0007669"/>
    <property type="project" value="TreeGrafter"/>
</dbReference>
<dbReference type="GO" id="GO:0004834">
    <property type="term" value="F:tryptophan synthase activity"/>
    <property type="evidence" value="ECO:0007669"/>
    <property type="project" value="UniProtKB-UniRule"/>
</dbReference>
<dbReference type="CDD" id="cd04724">
    <property type="entry name" value="Tryptophan_synthase_alpha"/>
    <property type="match status" value="1"/>
</dbReference>
<dbReference type="Gene3D" id="3.20.20.70">
    <property type="entry name" value="Aldolase class I"/>
    <property type="match status" value="1"/>
</dbReference>
<dbReference type="HAMAP" id="MF_00131">
    <property type="entry name" value="Trp_synth_alpha"/>
    <property type="match status" value="1"/>
</dbReference>
<dbReference type="InterPro" id="IPR013785">
    <property type="entry name" value="Aldolase_TIM"/>
</dbReference>
<dbReference type="InterPro" id="IPR011060">
    <property type="entry name" value="RibuloseP-bd_barrel"/>
</dbReference>
<dbReference type="InterPro" id="IPR018204">
    <property type="entry name" value="Trp_synthase_alpha_AS"/>
</dbReference>
<dbReference type="InterPro" id="IPR002028">
    <property type="entry name" value="Trp_synthase_suA"/>
</dbReference>
<dbReference type="NCBIfam" id="TIGR00262">
    <property type="entry name" value="trpA"/>
    <property type="match status" value="1"/>
</dbReference>
<dbReference type="PANTHER" id="PTHR43406:SF1">
    <property type="entry name" value="TRYPTOPHAN SYNTHASE ALPHA CHAIN, CHLOROPLASTIC"/>
    <property type="match status" value="1"/>
</dbReference>
<dbReference type="PANTHER" id="PTHR43406">
    <property type="entry name" value="TRYPTOPHAN SYNTHASE, ALPHA CHAIN"/>
    <property type="match status" value="1"/>
</dbReference>
<dbReference type="Pfam" id="PF00290">
    <property type="entry name" value="Trp_syntA"/>
    <property type="match status" value="1"/>
</dbReference>
<dbReference type="SUPFAM" id="SSF51366">
    <property type="entry name" value="Ribulose-phoshate binding barrel"/>
    <property type="match status" value="1"/>
</dbReference>
<dbReference type="PROSITE" id="PS00167">
    <property type="entry name" value="TRP_SYNTHASE_ALPHA"/>
    <property type="match status" value="1"/>
</dbReference>
<name>TRPA_CAMJD</name>
<proteinExistence type="inferred from homology"/>
<sequence length="249" mass="28069">MVDFRKFYKENANVAYTVLGYPNLQISEAFLQRLDQSPIDILELGVAYSDPIADGEIIADAAKIALDQGVDIHSVFELLARIKTKKALVFMVYYNLIFSYGLEKFVKKAKSLGICALIVPELSFEESDDLVKECEKYNIALITLVSVTTPKERVKKLVKHAKGFIYLLASIGITGTKSVEEAILQDKVKEIRSFTNLPIFVGFGIQNNQDVKRMRKVADGVIVGTSIVKYFKQENLDIIMKDIEEIFKK</sequence>
<keyword id="KW-0028">Amino-acid biosynthesis</keyword>
<keyword id="KW-0057">Aromatic amino acid biosynthesis</keyword>
<keyword id="KW-0456">Lyase</keyword>
<keyword id="KW-0822">Tryptophan biosynthesis</keyword>
<gene>
    <name evidence="1" type="primary">trpA</name>
    <name type="ordered locus">JJD26997_1610</name>
</gene>
<organism>
    <name type="scientific">Campylobacter jejuni subsp. doylei (strain ATCC BAA-1458 / RM4099 / 269.97)</name>
    <dbReference type="NCBI Taxonomy" id="360109"/>
    <lineage>
        <taxon>Bacteria</taxon>
        <taxon>Pseudomonadati</taxon>
        <taxon>Campylobacterota</taxon>
        <taxon>Epsilonproteobacteria</taxon>
        <taxon>Campylobacterales</taxon>
        <taxon>Campylobacteraceae</taxon>
        <taxon>Campylobacter</taxon>
    </lineage>
</organism>
<protein>
    <recommendedName>
        <fullName evidence="1">Tryptophan synthase alpha chain</fullName>
        <ecNumber evidence="1">4.2.1.20</ecNumber>
    </recommendedName>
</protein>
<evidence type="ECO:0000255" key="1">
    <source>
        <dbReference type="HAMAP-Rule" id="MF_00131"/>
    </source>
</evidence>
<reference key="1">
    <citation type="submission" date="2007-07" db="EMBL/GenBank/DDBJ databases">
        <title>Complete genome sequence of Campylobacter jejuni subsp doylei 269.97 isolated from human blood.</title>
        <authorList>
            <person name="Fouts D.E."/>
            <person name="Mongodin E.F."/>
            <person name="Puiu D."/>
            <person name="Sebastian Y."/>
            <person name="Miller W.G."/>
            <person name="Mandrell R.E."/>
            <person name="Lastovica A.J."/>
            <person name="Nelson K.E."/>
        </authorList>
    </citation>
    <scope>NUCLEOTIDE SEQUENCE [LARGE SCALE GENOMIC DNA]</scope>
    <source>
        <strain>ATCC BAA-1458 / RM4099 / 269.97</strain>
    </source>
</reference>
<comment type="function">
    <text evidence="1">The alpha subunit is responsible for the aldol cleavage of indoleglycerol phosphate to indole and glyceraldehyde 3-phosphate.</text>
</comment>
<comment type="catalytic activity">
    <reaction evidence="1">
        <text>(1S,2R)-1-C-(indol-3-yl)glycerol 3-phosphate + L-serine = D-glyceraldehyde 3-phosphate + L-tryptophan + H2O</text>
        <dbReference type="Rhea" id="RHEA:10532"/>
        <dbReference type="ChEBI" id="CHEBI:15377"/>
        <dbReference type="ChEBI" id="CHEBI:33384"/>
        <dbReference type="ChEBI" id="CHEBI:57912"/>
        <dbReference type="ChEBI" id="CHEBI:58866"/>
        <dbReference type="ChEBI" id="CHEBI:59776"/>
        <dbReference type="EC" id="4.2.1.20"/>
    </reaction>
</comment>
<comment type="pathway">
    <text evidence="1">Amino-acid biosynthesis; L-tryptophan biosynthesis; L-tryptophan from chorismate: step 5/5.</text>
</comment>
<comment type="subunit">
    <text evidence="1">Tetramer of two alpha and two beta chains.</text>
</comment>
<comment type="similarity">
    <text evidence="1">Belongs to the TrpA family.</text>
</comment>
<accession>A7H522</accession>
<feature type="chain" id="PRO_1000018183" description="Tryptophan synthase alpha chain">
    <location>
        <begin position="1"/>
        <end position="249"/>
    </location>
</feature>
<feature type="active site" description="Proton acceptor" evidence="1">
    <location>
        <position position="43"/>
    </location>
</feature>
<feature type="active site" description="Proton acceptor" evidence="1">
    <location>
        <position position="54"/>
    </location>
</feature>